<name>NASP1_CAEEL</name>
<sequence>MDTENIADASDIRVKDASGDSDEKGNGTTTEEETVEQKEKRLAELLAAGRRALKVNDIDKASDSLSEATELSSEIYGENHENTFDSLYYYGMATLELAKEESQLLKGPGEKESGDEEQAGNSDDKTDEENGETEKEDGEESGEEEDDDDDTMKLSWEILETARCIAAAKIEALEAEQSGISAIEEWNLKLADVLVLLGEHGISDGKYTQAFEDLDRALNIQRNVLPPSSRKIAQTYILIGNACASDANYDETVQYFGKTKDVLIARQTELKHELERGVDDKEKKSEFENELKELEEMMPGVEEMIADAVHSAAQVEETKKAIKAQFEGFTQVLAKLPQEAGDQKEANDISSLVRRPAKRAVDAPTDNQAVKKEKEEEGTTSI</sequence>
<reference evidence="7" key="1">
    <citation type="journal article" date="1998" name="Science">
        <title>Genome sequence of the nematode C. elegans: a platform for investigating biology.</title>
        <authorList>
            <consortium name="The C. elegans sequencing consortium"/>
        </authorList>
    </citation>
    <scope>NUCLEOTIDE SEQUENCE [LARGE SCALE GENOMIC DNA]</scope>
    <source>
        <strain evidence="7">Bristol N2</strain>
    </source>
</reference>
<reference evidence="6" key="2">
    <citation type="journal article" date="2006" name="Dev. Cell">
        <title>The PLZF-like protein TRA-4 cooperates with the Gli-like transcription factor TRA-1 to promote female development in C. elegans.</title>
        <authorList>
            <person name="Grote P."/>
            <person name="Conradt B."/>
        </authorList>
    </citation>
    <scope>FUNCTION</scope>
    <scope>INTERACTION WITH TRA-4 AND HDA-1</scope>
</reference>
<reference evidence="6" key="3">
    <citation type="journal article" date="2013" name="Infect. Immun.">
        <title>New role for DCR-1/dicer in Caenorhabditis elegans innate immunity against the highly virulent bacterium Bacillus thuringiensis DB27.</title>
        <authorList>
            <person name="Iatsenko I."/>
            <person name="Sinha A."/>
            <person name="Roedelsperger C."/>
            <person name="Sommer R.J."/>
        </authorList>
    </citation>
    <scope>FUNCTION</scope>
    <scope>DISRUPTION PHENOTYPE</scope>
    <scope>MUTAGENESIS OF LEU-53 AND ASP-307</scope>
</reference>
<dbReference type="EMBL" id="BX284602">
    <property type="protein sequence ID" value="CAA90441.1"/>
    <property type="molecule type" value="Genomic_DNA"/>
</dbReference>
<dbReference type="PIR" id="T19166">
    <property type="entry name" value="T19166"/>
</dbReference>
<dbReference type="RefSeq" id="NP_496380.1">
    <property type="nucleotide sequence ID" value="NM_063979.6"/>
</dbReference>
<dbReference type="SMR" id="Q17886"/>
<dbReference type="DIP" id="DIP-24701N"/>
<dbReference type="FunCoup" id="Q17886">
    <property type="interactions" value="2058"/>
</dbReference>
<dbReference type="IntAct" id="Q17886">
    <property type="interactions" value="2"/>
</dbReference>
<dbReference type="STRING" id="6239.C09H10.6.1"/>
<dbReference type="PaxDb" id="6239-C09H10.6"/>
<dbReference type="PeptideAtlas" id="Q17886"/>
<dbReference type="EnsemblMetazoa" id="C09H10.6.1">
    <property type="protein sequence ID" value="C09H10.6.1"/>
    <property type="gene ID" value="WBGene00007500"/>
</dbReference>
<dbReference type="GeneID" id="174697"/>
<dbReference type="KEGG" id="cel:CELE_C09H10.6"/>
<dbReference type="UCSC" id="C09H10.6">
    <property type="organism name" value="c. elegans"/>
</dbReference>
<dbReference type="AGR" id="WB:WBGene00007500"/>
<dbReference type="CTD" id="174697"/>
<dbReference type="WormBase" id="C09H10.6">
    <property type="protein sequence ID" value="CE03007"/>
    <property type="gene ID" value="WBGene00007500"/>
    <property type="gene designation" value="nasp-1"/>
</dbReference>
<dbReference type="eggNOG" id="KOG4563">
    <property type="taxonomic scope" value="Eukaryota"/>
</dbReference>
<dbReference type="GeneTree" id="ENSGT00390000016650"/>
<dbReference type="HOGENOM" id="CLU_010162_2_0_1"/>
<dbReference type="InParanoid" id="Q17886"/>
<dbReference type="OMA" id="QTYILMA"/>
<dbReference type="OrthoDB" id="5587616at2759"/>
<dbReference type="PhylomeDB" id="Q17886"/>
<dbReference type="PRO" id="PR:Q17886"/>
<dbReference type="Proteomes" id="UP000001940">
    <property type="component" value="Chromosome II"/>
</dbReference>
<dbReference type="Bgee" id="WBGene00007500">
    <property type="expression patterns" value="Expressed in germ line (C elegans) and 4 other cell types or tissues"/>
</dbReference>
<dbReference type="GO" id="GO:0005654">
    <property type="term" value="C:nucleoplasm"/>
    <property type="evidence" value="ECO:0000318"/>
    <property type="project" value="GO_Central"/>
</dbReference>
<dbReference type="GO" id="GO:0042393">
    <property type="term" value="F:histone binding"/>
    <property type="evidence" value="ECO:0000318"/>
    <property type="project" value="GO_Central"/>
</dbReference>
<dbReference type="GO" id="GO:0042826">
    <property type="term" value="F:histone deacetylase binding"/>
    <property type="evidence" value="ECO:0000353"/>
    <property type="project" value="UniProtKB"/>
</dbReference>
<dbReference type="GO" id="GO:0034080">
    <property type="term" value="P:CENP-A containing chromatin assembly"/>
    <property type="evidence" value="ECO:0000318"/>
    <property type="project" value="GO_Central"/>
</dbReference>
<dbReference type="GO" id="GO:0050830">
    <property type="term" value="P:defense response to Gram-positive bacterium"/>
    <property type="evidence" value="ECO:0000315"/>
    <property type="project" value="UniProtKB"/>
</dbReference>
<dbReference type="GO" id="GO:0006335">
    <property type="term" value="P:DNA replication-dependent chromatin assembly"/>
    <property type="evidence" value="ECO:0000318"/>
    <property type="project" value="GO_Central"/>
</dbReference>
<dbReference type="GO" id="GO:0045087">
    <property type="term" value="P:innate immune response"/>
    <property type="evidence" value="ECO:0007669"/>
    <property type="project" value="UniProtKB-KW"/>
</dbReference>
<dbReference type="FunFam" id="1.25.40.10:FF:001592">
    <property type="entry name" value="NASP (Human Nuclear Autoantigenic Sperm Protein) homolog"/>
    <property type="match status" value="1"/>
</dbReference>
<dbReference type="Gene3D" id="1.25.40.10">
    <property type="entry name" value="Tetratricopeptide repeat domain"/>
    <property type="match status" value="1"/>
</dbReference>
<dbReference type="InterPro" id="IPR051730">
    <property type="entry name" value="NASP-like"/>
</dbReference>
<dbReference type="InterPro" id="IPR019544">
    <property type="entry name" value="Tetratricopeptide_SHNi-TPR_dom"/>
</dbReference>
<dbReference type="InterPro" id="IPR011990">
    <property type="entry name" value="TPR-like_helical_dom_sf"/>
</dbReference>
<dbReference type="InterPro" id="IPR019734">
    <property type="entry name" value="TPR_rpt"/>
</dbReference>
<dbReference type="PANTHER" id="PTHR15081:SF1">
    <property type="entry name" value="NUCLEAR AUTOANTIGENIC SPERM PROTEIN"/>
    <property type="match status" value="1"/>
</dbReference>
<dbReference type="PANTHER" id="PTHR15081">
    <property type="entry name" value="NUCLEAR AUTOANTIGENIC SPERM PROTEIN NASP -RELATED"/>
    <property type="match status" value="1"/>
</dbReference>
<dbReference type="Pfam" id="PF10516">
    <property type="entry name" value="SHNi-TPR"/>
    <property type="match status" value="1"/>
</dbReference>
<dbReference type="SUPFAM" id="SSF48452">
    <property type="entry name" value="TPR-like"/>
    <property type="match status" value="1"/>
</dbReference>
<dbReference type="PROSITE" id="PS50005">
    <property type="entry name" value="TPR"/>
    <property type="match status" value="3"/>
</dbReference>
<feature type="chain" id="PRO_0000452696" description="Protein NASP homolog 1">
    <location>
        <begin position="1"/>
        <end position="382"/>
    </location>
</feature>
<feature type="repeat" description="TPR 1" evidence="1 2">
    <location>
        <begin position="42"/>
        <end position="75"/>
    </location>
</feature>
<feature type="repeat" description="TPR 2" evidence="2">
    <location>
        <begin position="191"/>
        <end position="224"/>
    </location>
</feature>
<feature type="repeat" description="TPR 3" evidence="1 2">
    <location>
        <begin position="233"/>
        <end position="266"/>
    </location>
</feature>
<feature type="region of interest" description="Disordered" evidence="3">
    <location>
        <begin position="1"/>
        <end position="39"/>
    </location>
</feature>
<feature type="region of interest" description="Disordered" evidence="3">
    <location>
        <begin position="103"/>
        <end position="151"/>
    </location>
</feature>
<feature type="region of interest" description="Disordered" evidence="3">
    <location>
        <begin position="337"/>
        <end position="382"/>
    </location>
</feature>
<feature type="coiled-coil region" evidence="1">
    <location>
        <begin position="264"/>
        <end position="304"/>
    </location>
</feature>
<feature type="compositionally biased region" description="Basic and acidic residues" evidence="3">
    <location>
        <begin position="10"/>
        <end position="25"/>
    </location>
</feature>
<feature type="compositionally biased region" description="Basic and acidic residues" evidence="3">
    <location>
        <begin position="103"/>
        <end position="112"/>
    </location>
</feature>
<feature type="compositionally biased region" description="Acidic residues" evidence="3">
    <location>
        <begin position="125"/>
        <end position="150"/>
    </location>
</feature>
<feature type="compositionally biased region" description="Basic and acidic residues" evidence="3">
    <location>
        <begin position="369"/>
        <end position="382"/>
    </location>
</feature>
<feature type="mutagenesis site" description="In tu439; strong resistance to B.thuringiensis-mediated killing. Resistant to infection by S.aureus. Reduced life span. RNAi-mediated knockdown of pmk-1 (by injection) abolishes resistance to B.thuringiensis. Deficient for RNAi-mediated knockdown by feeding; in association with N-307." evidence="5">
    <original>L</original>
    <variation>S</variation>
    <location>
        <position position="53"/>
    </location>
</feature>
<feature type="mutagenesis site" description="In tu439; strong resistance to B. thuringiensis-mediated killing. Resistant to infection by S.aureus. Reduced life span. RNAi-mediated knockdown of pmk-1 (by injection) abolishes resistance to B.thuringiensis. Deficient for RNAi-mediated knockdown by feeding; in association with S-53." evidence="5">
    <original>D</original>
    <variation>N</variation>
    <location>
        <position position="307"/>
    </location>
</feature>
<keyword id="KW-0175">Coiled coil</keyword>
<keyword id="KW-0391">Immunity</keyword>
<keyword id="KW-0399">Innate immunity</keyword>
<keyword id="KW-0539">Nucleus</keyword>
<keyword id="KW-1185">Reference proteome</keyword>
<keyword id="KW-0677">Repeat</keyword>
<keyword id="KW-0802">TPR repeat</keyword>
<gene>
    <name evidence="8" type="primary">nasp-1</name>
    <name evidence="8" type="ORF">C09H10.6</name>
</gene>
<evidence type="ECO:0000255" key="1"/>
<evidence type="ECO:0000255" key="2">
    <source>
        <dbReference type="PROSITE-ProRule" id="PRU00339"/>
    </source>
</evidence>
<evidence type="ECO:0000256" key="3">
    <source>
        <dbReference type="SAM" id="MobiDB-lite"/>
    </source>
</evidence>
<evidence type="ECO:0000269" key="4">
    <source>
    </source>
</evidence>
<evidence type="ECO:0000269" key="5">
    <source>
    </source>
</evidence>
<evidence type="ECO:0000305" key="6"/>
<evidence type="ECO:0000312" key="7">
    <source>
        <dbReference type="Proteomes" id="UP000001940"/>
    </source>
</evidence>
<evidence type="ECO:0000312" key="8">
    <source>
        <dbReference type="WormBase" id="C09H10.6"/>
    </source>
</evidence>
<organism evidence="7">
    <name type="scientific">Caenorhabditis elegans</name>
    <dbReference type="NCBI Taxonomy" id="6239"/>
    <lineage>
        <taxon>Eukaryota</taxon>
        <taxon>Metazoa</taxon>
        <taxon>Ecdysozoa</taxon>
        <taxon>Nematoda</taxon>
        <taxon>Chromadorea</taxon>
        <taxon>Rhabditida</taxon>
        <taxon>Rhabditina</taxon>
        <taxon>Rhabditomorpha</taxon>
        <taxon>Rhabditoidea</taxon>
        <taxon>Rhabditidae</taxon>
        <taxon>Peloderinae</taxon>
        <taxon>Caenorhabditis</taxon>
    </lineage>
</organism>
<accession>Q17886</accession>
<comment type="function">
    <text evidence="4 5">Promotes normal hermaphrodite (XX) development, in concert with zinc finger protein tra-4 and histone deacetylase hda-1, perhaps as components of a complex (PubMed:17011494). May act redundantly with nasp-2 (PubMed:17011494). Involved in innate immune response to B.thuringiensis strain DB27 and S.aureus bacteria (PubMed:23918784). May play a role in the uptake or spreading of dsRNA (PubMed:23918784).</text>
</comment>
<comment type="subunit">
    <text evidence="4">May interact with zinc finger protein tra-4 and histone deacetylase hda-1.</text>
</comment>
<comment type="subcellular location">
    <subcellularLocation>
        <location evidence="6">Nucleus</location>
    </subcellularLocation>
</comment>
<comment type="disruption phenotype">
    <text evidence="5">RNAi-mediated knockdown by injection leads to strong resistance to B.thuringiensis-mediated killing.</text>
</comment>
<comment type="similarity">
    <text evidence="6">Belongs to the NASP family.</text>
</comment>
<proteinExistence type="evidence at protein level"/>
<protein>
    <recommendedName>
        <fullName evidence="6">Protein NASP homolog 1</fullName>
    </recommendedName>
</protein>